<evidence type="ECO:0000255" key="1">
    <source>
        <dbReference type="HAMAP-Rule" id="MF_00636"/>
    </source>
</evidence>
<dbReference type="EMBL" id="CP000555">
    <property type="protein sequence ID" value="ABM96289.1"/>
    <property type="molecule type" value="Genomic_DNA"/>
</dbReference>
<dbReference type="SMR" id="A2SL50"/>
<dbReference type="STRING" id="420662.Mpe_A3336"/>
<dbReference type="KEGG" id="mpt:Mpe_A3336"/>
<dbReference type="eggNOG" id="COG1660">
    <property type="taxonomic scope" value="Bacteria"/>
</dbReference>
<dbReference type="HOGENOM" id="CLU_059558_1_1_4"/>
<dbReference type="Proteomes" id="UP000000366">
    <property type="component" value="Chromosome"/>
</dbReference>
<dbReference type="GO" id="GO:0005524">
    <property type="term" value="F:ATP binding"/>
    <property type="evidence" value="ECO:0007669"/>
    <property type="project" value="UniProtKB-UniRule"/>
</dbReference>
<dbReference type="GO" id="GO:0005525">
    <property type="term" value="F:GTP binding"/>
    <property type="evidence" value="ECO:0007669"/>
    <property type="project" value="UniProtKB-UniRule"/>
</dbReference>
<dbReference type="HAMAP" id="MF_00636">
    <property type="entry name" value="RapZ_like"/>
    <property type="match status" value="1"/>
</dbReference>
<dbReference type="InterPro" id="IPR027417">
    <property type="entry name" value="P-loop_NTPase"/>
</dbReference>
<dbReference type="InterPro" id="IPR005337">
    <property type="entry name" value="RapZ-like"/>
</dbReference>
<dbReference type="InterPro" id="IPR053930">
    <property type="entry name" value="RapZ-like_N"/>
</dbReference>
<dbReference type="InterPro" id="IPR053931">
    <property type="entry name" value="RapZ_C"/>
</dbReference>
<dbReference type="NCBIfam" id="NF003828">
    <property type="entry name" value="PRK05416.1"/>
    <property type="match status" value="1"/>
</dbReference>
<dbReference type="PANTHER" id="PTHR30448">
    <property type="entry name" value="RNASE ADAPTER PROTEIN RAPZ"/>
    <property type="match status" value="1"/>
</dbReference>
<dbReference type="PANTHER" id="PTHR30448:SF0">
    <property type="entry name" value="RNASE ADAPTER PROTEIN RAPZ"/>
    <property type="match status" value="1"/>
</dbReference>
<dbReference type="Pfam" id="PF22740">
    <property type="entry name" value="PapZ_C"/>
    <property type="match status" value="1"/>
</dbReference>
<dbReference type="Pfam" id="PF03668">
    <property type="entry name" value="RapZ-like_N"/>
    <property type="match status" value="1"/>
</dbReference>
<dbReference type="PIRSF" id="PIRSF005052">
    <property type="entry name" value="P-loopkin"/>
    <property type="match status" value="1"/>
</dbReference>
<dbReference type="SUPFAM" id="SSF52540">
    <property type="entry name" value="P-loop containing nucleoside triphosphate hydrolases"/>
    <property type="match status" value="1"/>
</dbReference>
<name>Y3336_METPP</name>
<comment type="function">
    <text evidence="1">Displays ATPase and GTPase activities.</text>
</comment>
<comment type="similarity">
    <text evidence="1">Belongs to the RapZ-like family.</text>
</comment>
<keyword id="KW-0067">ATP-binding</keyword>
<keyword id="KW-0342">GTP-binding</keyword>
<keyword id="KW-0547">Nucleotide-binding</keyword>
<keyword id="KW-1185">Reference proteome</keyword>
<proteinExistence type="inferred from homology"/>
<protein>
    <recommendedName>
        <fullName evidence="1">Nucleotide-binding protein Mpe_A3336</fullName>
    </recommendedName>
</protein>
<sequence>MSQDTVAPALPDAPREVVLVTGISGSGKSVALHALEDAGFYCVDNLPPELLPQFLRLEQARTDGAMRRIAVAVDVRSARSLPALLPSLSQLGSEGVKVRAIFLDASTHALVRRFSETRRRHPLSTGAPGEALDQHRALTDAIELERELLADLREASTVLDTSQLRAAQLRAWVRQLVQAPAGALTLVFESFAFKHGVPLDADLVYDVRVLPNPHYIDELRPLTGRDAPVADYLQQQPEVGEMLGQIEAFLVRWLPAFEQDQRAYLTVAIGCTGGQHRSVYFVEQLARRFRDRGATLVRHRELDAL</sequence>
<gene>
    <name type="ordered locus">Mpe_A3336</name>
</gene>
<feature type="chain" id="PRO_0000383263" description="Nucleotide-binding protein Mpe_A3336">
    <location>
        <begin position="1"/>
        <end position="305"/>
    </location>
</feature>
<feature type="binding site" evidence="1">
    <location>
        <begin position="22"/>
        <end position="29"/>
    </location>
    <ligand>
        <name>ATP</name>
        <dbReference type="ChEBI" id="CHEBI:30616"/>
    </ligand>
</feature>
<feature type="binding site" evidence="1">
    <location>
        <begin position="74"/>
        <end position="77"/>
    </location>
    <ligand>
        <name>GTP</name>
        <dbReference type="ChEBI" id="CHEBI:37565"/>
    </ligand>
</feature>
<reference key="1">
    <citation type="journal article" date="2007" name="J. Bacteriol.">
        <title>Whole-genome analysis of the methyl tert-butyl ether-degrading beta-proteobacterium Methylibium petroleiphilum PM1.</title>
        <authorList>
            <person name="Kane S.R."/>
            <person name="Chakicherla A.Y."/>
            <person name="Chain P.S.G."/>
            <person name="Schmidt R."/>
            <person name="Shin M.W."/>
            <person name="Legler T.C."/>
            <person name="Scow K.M."/>
            <person name="Larimer F.W."/>
            <person name="Lucas S.M."/>
            <person name="Richardson P.M."/>
            <person name="Hristova K.R."/>
        </authorList>
    </citation>
    <scope>NUCLEOTIDE SEQUENCE [LARGE SCALE GENOMIC DNA]</scope>
    <source>
        <strain>ATCC BAA-1232 / LMG 22953 / PM1</strain>
    </source>
</reference>
<accession>A2SL50</accession>
<organism>
    <name type="scientific">Methylibium petroleiphilum (strain ATCC BAA-1232 / LMG 22953 / PM1)</name>
    <dbReference type="NCBI Taxonomy" id="420662"/>
    <lineage>
        <taxon>Bacteria</taxon>
        <taxon>Pseudomonadati</taxon>
        <taxon>Pseudomonadota</taxon>
        <taxon>Betaproteobacteria</taxon>
        <taxon>Burkholderiales</taxon>
        <taxon>Sphaerotilaceae</taxon>
        <taxon>Methylibium</taxon>
    </lineage>
</organism>